<protein>
    <recommendedName>
        <fullName evidence="1">Glycerol kinase</fullName>
        <ecNumber evidence="1">2.7.1.30</ecNumber>
    </recommendedName>
    <alternativeName>
        <fullName evidence="1">ATP:glycerol 3-phosphotransferase</fullName>
    </alternativeName>
    <alternativeName>
        <fullName evidence="1">Glycerokinase</fullName>
        <shortName evidence="1">GK</shortName>
    </alternativeName>
</protein>
<name>GLPK_CERS4</name>
<feature type="chain" id="PRO_1000020770" description="Glycerol kinase">
    <location>
        <begin position="1"/>
        <end position="493"/>
    </location>
</feature>
<feature type="binding site" evidence="1">
    <location>
        <position position="11"/>
    </location>
    <ligand>
        <name>ADP</name>
        <dbReference type="ChEBI" id="CHEBI:456216"/>
    </ligand>
</feature>
<feature type="binding site" evidence="1">
    <location>
        <position position="11"/>
    </location>
    <ligand>
        <name>ATP</name>
        <dbReference type="ChEBI" id="CHEBI:30616"/>
    </ligand>
</feature>
<feature type="binding site" evidence="1">
    <location>
        <position position="11"/>
    </location>
    <ligand>
        <name>sn-glycerol 3-phosphate</name>
        <dbReference type="ChEBI" id="CHEBI:57597"/>
    </ligand>
</feature>
<feature type="binding site" evidence="1">
    <location>
        <position position="12"/>
    </location>
    <ligand>
        <name>ATP</name>
        <dbReference type="ChEBI" id="CHEBI:30616"/>
    </ligand>
</feature>
<feature type="binding site" evidence="1">
    <location>
        <position position="13"/>
    </location>
    <ligand>
        <name>ATP</name>
        <dbReference type="ChEBI" id="CHEBI:30616"/>
    </ligand>
</feature>
<feature type="binding site" evidence="1">
    <location>
        <position position="15"/>
    </location>
    <ligand>
        <name>ADP</name>
        <dbReference type="ChEBI" id="CHEBI:456216"/>
    </ligand>
</feature>
<feature type="binding site" evidence="1">
    <location>
        <position position="80"/>
    </location>
    <ligand>
        <name>glycerol</name>
        <dbReference type="ChEBI" id="CHEBI:17754"/>
    </ligand>
</feature>
<feature type="binding site" evidence="1">
    <location>
        <position position="80"/>
    </location>
    <ligand>
        <name>sn-glycerol 3-phosphate</name>
        <dbReference type="ChEBI" id="CHEBI:57597"/>
    </ligand>
</feature>
<feature type="binding site" evidence="1">
    <location>
        <position position="81"/>
    </location>
    <ligand>
        <name>glycerol</name>
        <dbReference type="ChEBI" id="CHEBI:17754"/>
    </ligand>
</feature>
<feature type="binding site" evidence="1">
    <location>
        <position position="81"/>
    </location>
    <ligand>
        <name>sn-glycerol 3-phosphate</name>
        <dbReference type="ChEBI" id="CHEBI:57597"/>
    </ligand>
</feature>
<feature type="binding site" evidence="1">
    <location>
        <position position="132"/>
    </location>
    <ligand>
        <name>glycerol</name>
        <dbReference type="ChEBI" id="CHEBI:17754"/>
    </ligand>
</feature>
<feature type="binding site" evidence="1">
    <location>
        <position position="132"/>
    </location>
    <ligand>
        <name>sn-glycerol 3-phosphate</name>
        <dbReference type="ChEBI" id="CHEBI:57597"/>
    </ligand>
</feature>
<feature type="binding site" evidence="1">
    <location>
        <position position="241"/>
    </location>
    <ligand>
        <name>glycerol</name>
        <dbReference type="ChEBI" id="CHEBI:17754"/>
    </ligand>
</feature>
<feature type="binding site" evidence="1">
    <location>
        <position position="241"/>
    </location>
    <ligand>
        <name>sn-glycerol 3-phosphate</name>
        <dbReference type="ChEBI" id="CHEBI:57597"/>
    </ligand>
</feature>
<feature type="binding site" evidence="1">
    <location>
        <position position="242"/>
    </location>
    <ligand>
        <name>glycerol</name>
        <dbReference type="ChEBI" id="CHEBI:17754"/>
    </ligand>
</feature>
<feature type="binding site" evidence="1">
    <location>
        <position position="263"/>
    </location>
    <ligand>
        <name>ADP</name>
        <dbReference type="ChEBI" id="CHEBI:456216"/>
    </ligand>
</feature>
<feature type="binding site" evidence="1">
    <location>
        <position position="263"/>
    </location>
    <ligand>
        <name>ATP</name>
        <dbReference type="ChEBI" id="CHEBI:30616"/>
    </ligand>
</feature>
<feature type="binding site" evidence="1">
    <location>
        <position position="306"/>
    </location>
    <ligand>
        <name>ADP</name>
        <dbReference type="ChEBI" id="CHEBI:456216"/>
    </ligand>
</feature>
<feature type="binding site" evidence="1">
    <location>
        <position position="306"/>
    </location>
    <ligand>
        <name>ATP</name>
        <dbReference type="ChEBI" id="CHEBI:30616"/>
    </ligand>
</feature>
<feature type="binding site" evidence="1">
    <location>
        <position position="310"/>
    </location>
    <ligand>
        <name>ATP</name>
        <dbReference type="ChEBI" id="CHEBI:30616"/>
    </ligand>
</feature>
<feature type="binding site" evidence="1">
    <location>
        <position position="408"/>
    </location>
    <ligand>
        <name>ADP</name>
        <dbReference type="ChEBI" id="CHEBI:456216"/>
    </ligand>
</feature>
<feature type="binding site" evidence="1">
    <location>
        <position position="408"/>
    </location>
    <ligand>
        <name>ATP</name>
        <dbReference type="ChEBI" id="CHEBI:30616"/>
    </ligand>
</feature>
<proteinExistence type="inferred from homology"/>
<comment type="function">
    <text evidence="1">Key enzyme in the regulation of glycerol uptake and metabolism. Catalyzes the phosphorylation of glycerol to yield sn-glycerol 3-phosphate.</text>
</comment>
<comment type="catalytic activity">
    <reaction evidence="1">
        <text>glycerol + ATP = sn-glycerol 3-phosphate + ADP + H(+)</text>
        <dbReference type="Rhea" id="RHEA:21644"/>
        <dbReference type="ChEBI" id="CHEBI:15378"/>
        <dbReference type="ChEBI" id="CHEBI:17754"/>
        <dbReference type="ChEBI" id="CHEBI:30616"/>
        <dbReference type="ChEBI" id="CHEBI:57597"/>
        <dbReference type="ChEBI" id="CHEBI:456216"/>
        <dbReference type="EC" id="2.7.1.30"/>
    </reaction>
</comment>
<comment type="activity regulation">
    <text evidence="1">Inhibited by fructose 1,6-bisphosphate (FBP).</text>
</comment>
<comment type="pathway">
    <text evidence="1">Polyol metabolism; glycerol degradation via glycerol kinase pathway; sn-glycerol 3-phosphate from glycerol: step 1/1.</text>
</comment>
<comment type="similarity">
    <text evidence="1">Belongs to the FGGY kinase family.</text>
</comment>
<accession>Q3J317</accession>
<reference key="1">
    <citation type="submission" date="2005-09" db="EMBL/GenBank/DDBJ databases">
        <title>Complete sequence of chromosome 1 of Rhodobacter sphaeroides 2.4.1.</title>
        <authorList>
            <person name="Copeland A."/>
            <person name="Lucas S."/>
            <person name="Lapidus A."/>
            <person name="Barry K."/>
            <person name="Detter J.C."/>
            <person name="Glavina T."/>
            <person name="Hammon N."/>
            <person name="Israni S."/>
            <person name="Pitluck S."/>
            <person name="Richardson P."/>
            <person name="Mackenzie C."/>
            <person name="Choudhary M."/>
            <person name="Larimer F."/>
            <person name="Hauser L.J."/>
            <person name="Land M."/>
            <person name="Donohue T.J."/>
            <person name="Kaplan S."/>
        </authorList>
    </citation>
    <scope>NUCLEOTIDE SEQUENCE [LARGE SCALE GENOMIC DNA]</scope>
    <source>
        <strain>ATCC 17023 / DSM 158 / JCM 6121 / CCUG 31486 / LMG 2827 / NBRC 12203 / NCIMB 8253 / ATH 2.4.1.</strain>
    </source>
</reference>
<keyword id="KW-0067">ATP-binding</keyword>
<keyword id="KW-0319">Glycerol metabolism</keyword>
<keyword id="KW-0418">Kinase</keyword>
<keyword id="KW-0547">Nucleotide-binding</keyword>
<keyword id="KW-1185">Reference proteome</keyword>
<keyword id="KW-0808">Transferase</keyword>
<dbReference type="EC" id="2.7.1.30" evidence="1"/>
<dbReference type="EMBL" id="CP000143">
    <property type="protein sequence ID" value="ABA78817.1"/>
    <property type="molecule type" value="Genomic_DNA"/>
</dbReference>
<dbReference type="RefSeq" id="WP_011337641.1">
    <property type="nucleotide sequence ID" value="NC_007493.2"/>
</dbReference>
<dbReference type="RefSeq" id="YP_352718.1">
    <property type="nucleotide sequence ID" value="NC_007493.2"/>
</dbReference>
<dbReference type="SMR" id="Q3J317"/>
<dbReference type="STRING" id="272943.RSP_2662"/>
<dbReference type="EnsemblBacteria" id="ABA78817">
    <property type="protein sequence ID" value="ABA78817"/>
    <property type="gene ID" value="RSP_2662"/>
</dbReference>
<dbReference type="GeneID" id="3720353"/>
<dbReference type="KEGG" id="rsp:RSP_2662"/>
<dbReference type="PATRIC" id="fig|272943.9.peg.1582"/>
<dbReference type="eggNOG" id="COG0554">
    <property type="taxonomic scope" value="Bacteria"/>
</dbReference>
<dbReference type="OrthoDB" id="9805576at2"/>
<dbReference type="PhylomeDB" id="Q3J317"/>
<dbReference type="UniPathway" id="UPA00618">
    <property type="reaction ID" value="UER00672"/>
</dbReference>
<dbReference type="Proteomes" id="UP000002703">
    <property type="component" value="Chromosome 1"/>
</dbReference>
<dbReference type="GO" id="GO:0005829">
    <property type="term" value="C:cytosol"/>
    <property type="evidence" value="ECO:0007669"/>
    <property type="project" value="TreeGrafter"/>
</dbReference>
<dbReference type="GO" id="GO:0005524">
    <property type="term" value="F:ATP binding"/>
    <property type="evidence" value="ECO:0007669"/>
    <property type="project" value="UniProtKB-UniRule"/>
</dbReference>
<dbReference type="GO" id="GO:0004370">
    <property type="term" value="F:glycerol kinase activity"/>
    <property type="evidence" value="ECO:0000250"/>
    <property type="project" value="UniProtKB"/>
</dbReference>
<dbReference type="GO" id="GO:0019563">
    <property type="term" value="P:glycerol catabolic process"/>
    <property type="evidence" value="ECO:0007669"/>
    <property type="project" value="UniProtKB-UniRule"/>
</dbReference>
<dbReference type="GO" id="GO:0006071">
    <property type="term" value="P:glycerol metabolic process"/>
    <property type="evidence" value="ECO:0000250"/>
    <property type="project" value="UniProtKB"/>
</dbReference>
<dbReference type="GO" id="GO:0006072">
    <property type="term" value="P:glycerol-3-phosphate metabolic process"/>
    <property type="evidence" value="ECO:0007669"/>
    <property type="project" value="InterPro"/>
</dbReference>
<dbReference type="CDD" id="cd07786">
    <property type="entry name" value="FGGY_EcGK_like"/>
    <property type="match status" value="1"/>
</dbReference>
<dbReference type="FunFam" id="3.30.420.40:FF:000007">
    <property type="entry name" value="Glycerol kinase"/>
    <property type="match status" value="1"/>
</dbReference>
<dbReference type="FunFam" id="3.30.420.40:FF:000008">
    <property type="entry name" value="Glycerol kinase"/>
    <property type="match status" value="1"/>
</dbReference>
<dbReference type="Gene3D" id="3.30.420.40">
    <property type="match status" value="2"/>
</dbReference>
<dbReference type="HAMAP" id="MF_00186">
    <property type="entry name" value="Glycerol_kin"/>
    <property type="match status" value="1"/>
</dbReference>
<dbReference type="InterPro" id="IPR043129">
    <property type="entry name" value="ATPase_NBD"/>
</dbReference>
<dbReference type="InterPro" id="IPR000577">
    <property type="entry name" value="Carb_kinase_FGGY"/>
</dbReference>
<dbReference type="InterPro" id="IPR018483">
    <property type="entry name" value="Carb_kinase_FGGY_CS"/>
</dbReference>
<dbReference type="InterPro" id="IPR018485">
    <property type="entry name" value="FGGY_C"/>
</dbReference>
<dbReference type="InterPro" id="IPR018484">
    <property type="entry name" value="FGGY_N"/>
</dbReference>
<dbReference type="InterPro" id="IPR005999">
    <property type="entry name" value="Glycerol_kin"/>
</dbReference>
<dbReference type="NCBIfam" id="TIGR01311">
    <property type="entry name" value="glycerol_kin"/>
    <property type="match status" value="1"/>
</dbReference>
<dbReference type="NCBIfam" id="NF000756">
    <property type="entry name" value="PRK00047.1"/>
    <property type="match status" value="1"/>
</dbReference>
<dbReference type="PANTHER" id="PTHR10196:SF78">
    <property type="entry name" value="GLYCEROL KINASE"/>
    <property type="match status" value="1"/>
</dbReference>
<dbReference type="PANTHER" id="PTHR10196">
    <property type="entry name" value="SUGAR KINASE"/>
    <property type="match status" value="1"/>
</dbReference>
<dbReference type="Pfam" id="PF02782">
    <property type="entry name" value="FGGY_C"/>
    <property type="match status" value="1"/>
</dbReference>
<dbReference type="Pfam" id="PF00370">
    <property type="entry name" value="FGGY_N"/>
    <property type="match status" value="1"/>
</dbReference>
<dbReference type="PIRSF" id="PIRSF000538">
    <property type="entry name" value="GlpK"/>
    <property type="match status" value="1"/>
</dbReference>
<dbReference type="SUPFAM" id="SSF53067">
    <property type="entry name" value="Actin-like ATPase domain"/>
    <property type="match status" value="2"/>
</dbReference>
<dbReference type="PROSITE" id="PS00933">
    <property type="entry name" value="FGGY_KINASES_1"/>
    <property type="match status" value="1"/>
</dbReference>
<dbReference type="PROSITE" id="PS00445">
    <property type="entry name" value="FGGY_KINASES_2"/>
    <property type="match status" value="1"/>
</dbReference>
<organism>
    <name type="scientific">Cereibacter sphaeroides (strain ATCC 17023 / DSM 158 / JCM 6121 / CCUG 31486 / LMG 2827 / NBRC 12203 / NCIMB 8253 / ATH 2.4.1.)</name>
    <name type="common">Rhodobacter sphaeroides</name>
    <dbReference type="NCBI Taxonomy" id="272943"/>
    <lineage>
        <taxon>Bacteria</taxon>
        <taxon>Pseudomonadati</taxon>
        <taxon>Pseudomonadota</taxon>
        <taxon>Alphaproteobacteria</taxon>
        <taxon>Rhodobacterales</taxon>
        <taxon>Paracoccaceae</taxon>
        <taxon>Cereibacter</taxon>
    </lineage>
</organism>
<sequence length="493" mass="53566">MNHILAIDQGTTSSRAMVFDEALTLKSVAQEEFPQIYPRPGWVEHDPSDLWSSVAATARAAVERAEIDGSLAAIGITNQRETVVVWERASGHPIHNAIVWQDRRTADLCHALAEAGHEPTITERTGLLLDPYFSATKLKWLLDHVEGARARARRGELLFGTVDSYLIWKLTGGRAHVTDATNAARTMLFDIGRGIWDPEICGLLDIPMEMLPEVRDCAAPFGMTRADLFGREIPILGVAGDQQAATCGQACFRPGMMKSTYGTGCFALLNTGEERVTSRARLLTTIAYQLGGKRTYALEGSIFIAGAVVQWLRDGLKIIREAGETQGLALSSDAAQDLVIVPAFTGLGAPWWKPESRGAVFGLTRNSGPAEFARAALESVGYQTRDLLEAMRADWAAGAEGVLRVDGGMAASDWSLQFLADIIGAPVDRPVVRETTALGVAWLAGMQAGLCPGPEEFAADWALERRFEPQMEASVREAKYDRWGRAVRAVMAV</sequence>
<evidence type="ECO:0000255" key="1">
    <source>
        <dbReference type="HAMAP-Rule" id="MF_00186"/>
    </source>
</evidence>
<gene>
    <name evidence="1" type="primary">glpK</name>
    <name type="ordered locus">RHOS4_12490</name>
    <name type="ordered locus">RSP_2662</name>
</gene>